<name>PYRF_ECOHS</name>
<comment type="function">
    <text evidence="1">Catalyzes the decarboxylation of orotidine 5'-monophosphate (OMP) to uridine 5'-monophosphate (UMP).</text>
</comment>
<comment type="catalytic activity">
    <reaction evidence="1">
        <text>orotidine 5'-phosphate + H(+) = UMP + CO2</text>
        <dbReference type="Rhea" id="RHEA:11596"/>
        <dbReference type="ChEBI" id="CHEBI:15378"/>
        <dbReference type="ChEBI" id="CHEBI:16526"/>
        <dbReference type="ChEBI" id="CHEBI:57538"/>
        <dbReference type="ChEBI" id="CHEBI:57865"/>
        <dbReference type="EC" id="4.1.1.23"/>
    </reaction>
</comment>
<comment type="pathway">
    <text evidence="1">Pyrimidine metabolism; UMP biosynthesis via de novo pathway; UMP from orotate: step 2/2.</text>
</comment>
<comment type="subunit">
    <text evidence="1">Homodimer.</text>
</comment>
<comment type="similarity">
    <text evidence="1">Belongs to the OMP decarboxylase family. Type 1 subfamily.</text>
</comment>
<accession>A7ZZM0</accession>
<feature type="chain" id="PRO_1000065905" description="Orotidine 5'-phosphate decarboxylase">
    <location>
        <begin position="1"/>
        <end position="245"/>
    </location>
</feature>
<feature type="active site" description="Proton donor" evidence="1">
    <location>
        <position position="73"/>
    </location>
</feature>
<feature type="binding site" evidence="1">
    <location>
        <position position="22"/>
    </location>
    <ligand>
        <name>substrate</name>
    </ligand>
</feature>
<feature type="binding site" evidence="1">
    <location>
        <position position="44"/>
    </location>
    <ligand>
        <name>substrate</name>
    </ligand>
</feature>
<feature type="binding site" evidence="1">
    <location>
        <begin position="71"/>
        <end position="80"/>
    </location>
    <ligand>
        <name>substrate</name>
    </ligand>
</feature>
<feature type="binding site" evidence="1">
    <location>
        <position position="131"/>
    </location>
    <ligand>
        <name>substrate</name>
    </ligand>
</feature>
<feature type="binding site" evidence="1">
    <location>
        <position position="192"/>
    </location>
    <ligand>
        <name>substrate</name>
    </ligand>
</feature>
<feature type="binding site" evidence="1">
    <location>
        <position position="201"/>
    </location>
    <ligand>
        <name>substrate</name>
    </ligand>
</feature>
<feature type="binding site" evidence="1">
    <location>
        <position position="221"/>
    </location>
    <ligand>
        <name>substrate</name>
    </ligand>
</feature>
<feature type="binding site" evidence="1">
    <location>
        <position position="222"/>
    </location>
    <ligand>
        <name>substrate</name>
    </ligand>
</feature>
<proteinExistence type="inferred from homology"/>
<keyword id="KW-0210">Decarboxylase</keyword>
<keyword id="KW-0456">Lyase</keyword>
<keyword id="KW-0665">Pyrimidine biosynthesis</keyword>
<protein>
    <recommendedName>
        <fullName evidence="1">Orotidine 5'-phosphate decarboxylase</fullName>
        <ecNumber evidence="1">4.1.1.23</ecNumber>
    </recommendedName>
    <alternativeName>
        <fullName evidence="1">OMP decarboxylase</fullName>
        <shortName evidence="1">OMPDCase</shortName>
        <shortName evidence="1">OMPdecase</shortName>
    </alternativeName>
</protein>
<organism>
    <name type="scientific">Escherichia coli O9:H4 (strain HS)</name>
    <dbReference type="NCBI Taxonomy" id="331112"/>
    <lineage>
        <taxon>Bacteria</taxon>
        <taxon>Pseudomonadati</taxon>
        <taxon>Pseudomonadota</taxon>
        <taxon>Gammaproteobacteria</taxon>
        <taxon>Enterobacterales</taxon>
        <taxon>Enterobacteriaceae</taxon>
        <taxon>Escherichia</taxon>
    </lineage>
</organism>
<gene>
    <name evidence="1" type="primary">pyrF</name>
    <name type="ordered locus">EcHS_A1393</name>
</gene>
<evidence type="ECO:0000255" key="1">
    <source>
        <dbReference type="HAMAP-Rule" id="MF_01200"/>
    </source>
</evidence>
<sequence length="245" mass="26366">MTLTASSSSRAVTNSPVVVALDYHNRDDALSFVDKIDPRDCRLKVGKEMFTLFGPQFVRELQQRGFDIFLDLKFHDIPNTAAHAVAAAADLGVWMVNVHASGGARMMTAAREALVPFGKDAPLLIAVTVLTSMEASDLVDLGMTLSPADYAERLAALTQKCGLDGVVCSAQEAVRFKQVFGQEFKLVTPGIRPQGSEAGDQRRIMTPEQALSAGVDYMVIGRPVTQSVDPAQTLKAINASLQRSA</sequence>
<reference key="1">
    <citation type="journal article" date="2008" name="J. Bacteriol.">
        <title>The pangenome structure of Escherichia coli: comparative genomic analysis of E. coli commensal and pathogenic isolates.</title>
        <authorList>
            <person name="Rasko D.A."/>
            <person name="Rosovitz M.J."/>
            <person name="Myers G.S.A."/>
            <person name="Mongodin E.F."/>
            <person name="Fricke W.F."/>
            <person name="Gajer P."/>
            <person name="Crabtree J."/>
            <person name="Sebaihia M."/>
            <person name="Thomson N.R."/>
            <person name="Chaudhuri R."/>
            <person name="Henderson I.R."/>
            <person name="Sperandio V."/>
            <person name="Ravel J."/>
        </authorList>
    </citation>
    <scope>NUCLEOTIDE SEQUENCE [LARGE SCALE GENOMIC DNA]</scope>
    <source>
        <strain>HS</strain>
    </source>
</reference>
<dbReference type="EC" id="4.1.1.23" evidence="1"/>
<dbReference type="EMBL" id="CP000802">
    <property type="protein sequence ID" value="ABV05724.1"/>
    <property type="molecule type" value="Genomic_DNA"/>
</dbReference>
<dbReference type="RefSeq" id="WP_000176278.1">
    <property type="nucleotide sequence ID" value="NC_009800.1"/>
</dbReference>
<dbReference type="SMR" id="A7ZZM0"/>
<dbReference type="GeneID" id="93775404"/>
<dbReference type="KEGG" id="ecx:EcHS_A1393"/>
<dbReference type="HOGENOM" id="CLU_067069_0_0_6"/>
<dbReference type="UniPathway" id="UPA00070">
    <property type="reaction ID" value="UER00120"/>
</dbReference>
<dbReference type="GO" id="GO:0005829">
    <property type="term" value="C:cytosol"/>
    <property type="evidence" value="ECO:0007669"/>
    <property type="project" value="TreeGrafter"/>
</dbReference>
<dbReference type="GO" id="GO:0004590">
    <property type="term" value="F:orotidine-5'-phosphate decarboxylase activity"/>
    <property type="evidence" value="ECO:0007669"/>
    <property type="project" value="UniProtKB-UniRule"/>
</dbReference>
<dbReference type="GO" id="GO:0006207">
    <property type="term" value="P:'de novo' pyrimidine nucleobase biosynthetic process"/>
    <property type="evidence" value="ECO:0007669"/>
    <property type="project" value="InterPro"/>
</dbReference>
<dbReference type="GO" id="GO:0044205">
    <property type="term" value="P:'de novo' UMP biosynthetic process"/>
    <property type="evidence" value="ECO:0007669"/>
    <property type="project" value="UniProtKB-UniRule"/>
</dbReference>
<dbReference type="CDD" id="cd04725">
    <property type="entry name" value="OMP_decarboxylase_like"/>
    <property type="match status" value="1"/>
</dbReference>
<dbReference type="FunFam" id="3.20.20.70:FF:000015">
    <property type="entry name" value="Orotidine 5'-phosphate decarboxylase"/>
    <property type="match status" value="1"/>
</dbReference>
<dbReference type="Gene3D" id="3.20.20.70">
    <property type="entry name" value="Aldolase class I"/>
    <property type="match status" value="1"/>
</dbReference>
<dbReference type="HAMAP" id="MF_01200_B">
    <property type="entry name" value="OMPdecase_type1_B"/>
    <property type="match status" value="1"/>
</dbReference>
<dbReference type="InterPro" id="IPR013785">
    <property type="entry name" value="Aldolase_TIM"/>
</dbReference>
<dbReference type="InterPro" id="IPR014732">
    <property type="entry name" value="OMPdecase"/>
</dbReference>
<dbReference type="InterPro" id="IPR018089">
    <property type="entry name" value="OMPdecase_AS"/>
</dbReference>
<dbReference type="InterPro" id="IPR047596">
    <property type="entry name" value="OMPdecase_bac"/>
</dbReference>
<dbReference type="InterPro" id="IPR001754">
    <property type="entry name" value="OMPdeCOase_dom"/>
</dbReference>
<dbReference type="InterPro" id="IPR011060">
    <property type="entry name" value="RibuloseP-bd_barrel"/>
</dbReference>
<dbReference type="NCBIfam" id="NF001273">
    <property type="entry name" value="PRK00230.1"/>
    <property type="match status" value="1"/>
</dbReference>
<dbReference type="NCBIfam" id="TIGR01740">
    <property type="entry name" value="pyrF"/>
    <property type="match status" value="1"/>
</dbReference>
<dbReference type="PANTHER" id="PTHR32119">
    <property type="entry name" value="OROTIDINE 5'-PHOSPHATE DECARBOXYLASE"/>
    <property type="match status" value="1"/>
</dbReference>
<dbReference type="PANTHER" id="PTHR32119:SF2">
    <property type="entry name" value="OROTIDINE 5'-PHOSPHATE DECARBOXYLASE"/>
    <property type="match status" value="1"/>
</dbReference>
<dbReference type="Pfam" id="PF00215">
    <property type="entry name" value="OMPdecase"/>
    <property type="match status" value="1"/>
</dbReference>
<dbReference type="SMART" id="SM00934">
    <property type="entry name" value="OMPdecase"/>
    <property type="match status" value="1"/>
</dbReference>
<dbReference type="SUPFAM" id="SSF51366">
    <property type="entry name" value="Ribulose-phoshate binding barrel"/>
    <property type="match status" value="1"/>
</dbReference>
<dbReference type="PROSITE" id="PS00156">
    <property type="entry name" value="OMPDECASE"/>
    <property type="match status" value="1"/>
</dbReference>